<accession>B6VH77</accession>
<reference key="1">
    <citation type="submission" date="2008-10" db="EMBL/GenBank/DDBJ databases">
        <title>Evolutionary conservation of SPRASA in various animal species.</title>
        <authorList>
            <person name="Prendergast D."/>
            <person name="Woad K.J."/>
            <person name="Chamley L.W."/>
            <person name="Shelling A.N."/>
        </authorList>
    </citation>
    <scope>NUCLEOTIDE SEQUENCE [GENOMIC DNA]</scope>
</reference>
<gene>
    <name type="primary">SPACA3</name>
    <name type="synonym">SPRASA</name>
</gene>
<protein>
    <recommendedName>
        <fullName>Sperm acrosome membrane-associated protein 3</fullName>
    </recommendedName>
    <alternativeName>
        <fullName>Sperm protein reactive with antisperm antibodies</fullName>
        <shortName>Sperm protein reactive with ASA</shortName>
    </alternativeName>
    <component>
        <recommendedName>
            <fullName>Sperm acrosome membrane-associated protein 3, membrane form</fullName>
        </recommendedName>
    </component>
    <component>
        <recommendedName>
            <fullName>Sperm acrosome membrane-associated protein 3, processed form</fullName>
        </recommendedName>
    </component>
</protein>
<keyword id="KW-0968">Cytoplasmic vesicle</keyword>
<keyword id="KW-1015">Disulfide bond</keyword>
<keyword id="KW-0472">Membrane</keyword>
<keyword id="KW-0735">Signal-anchor</keyword>
<keyword id="KW-0812">Transmembrane</keyword>
<keyword id="KW-1133">Transmembrane helix</keyword>
<evidence type="ECO:0000250" key="1"/>
<evidence type="ECO:0000255" key="2"/>
<evidence type="ECO:0000255" key="3">
    <source>
        <dbReference type="PROSITE-ProRule" id="PRU00680"/>
    </source>
</evidence>
<evidence type="ECO:0000305" key="4"/>
<proteinExistence type="inferred from homology"/>
<comment type="function">
    <text evidence="1">Sperm surface membrane protein that may be involved in sperm-egg plasma membrane adhesion and fusion during fertilization. It could be a potential receptor for the egg oligosaccharide residue N-acetylglucosamine, which is present in the extracellular matrix over the egg plasma membrane. The processed form has no detectable bacteriolytic activity in vitro (By similarity).</text>
</comment>
<comment type="subunit">
    <text evidence="1">Interacts with ASTL.</text>
</comment>
<comment type="subcellular location">
    <subcellularLocation>
        <location evidence="1">Cytoplasmic vesicle</location>
        <location evidence="1">Secretory vesicle</location>
        <location evidence="1">Acrosome membrane</location>
        <topology evidence="1">Single-pass type II membrane protein</topology>
    </subcellularLocation>
    <text evidence="1">Anterior acrosome in non-capacitated spermatozoa and retained in the equatorial segment and in the luminal face of both the inner and outer acrosomal membranes following capacitation and the acrosome reaction.</text>
</comment>
<comment type="PTM">
    <text evidence="1">The processed form derives from the membrane form by proteolytic processing.</text>
</comment>
<comment type="similarity">
    <text evidence="3">Belongs to the glycosyl hydrolase 22 family.</text>
</comment>
<comment type="caution">
    <text evidence="4">Although it belongs to the glycosyl hydrolase 22 family, Thr-122 and Asn-139 are present instead of the conserved Glu and Asp which are active site residues. It is therefore expected that this protein lacks hydrolase activity.</text>
</comment>
<feature type="chain" id="PRO_0000375084" description="Sperm acrosome membrane-associated protein 3, membrane form">
    <location>
        <begin position="1"/>
        <end position="167" status="greater than"/>
    </location>
</feature>
<feature type="chain" id="PRO_0000375085" description="Sperm acrosome membrane-associated protein 3, processed form">
    <location>
        <begin position="88"/>
        <end position="167" status="greater than"/>
    </location>
</feature>
<feature type="topological domain" description="Cytoplasmic" evidence="2">
    <location>
        <begin position="1"/>
        <end position="63"/>
    </location>
</feature>
<feature type="transmembrane region" description="Helical; Signal-anchor for type II membrane protein" evidence="2">
    <location>
        <begin position="64"/>
        <end position="84"/>
    </location>
</feature>
<feature type="topological domain" description="Extracellular" evidence="2">
    <location>
        <begin position="85"/>
        <end position="167" status="greater than"/>
    </location>
</feature>
<feature type="domain" description="C-type lysozyme" evidence="3">
    <location>
        <begin position="88"/>
        <end position="167" status="greater than"/>
    </location>
</feature>
<feature type="site" description="Cleavage; to produce processed form" evidence="1">
    <location>
        <begin position="87"/>
        <end position="88"/>
    </location>
</feature>
<feature type="disulfide bond" evidence="3">
    <location>
        <begin position="151"/>
        <end position="166"/>
    </location>
</feature>
<feature type="non-terminal residue">
    <location>
        <position position="167"/>
    </location>
</feature>
<name>SACA3_PONPY</name>
<organism>
    <name type="scientific">Pongo pygmaeus</name>
    <name type="common">Bornean orangutan</name>
    <dbReference type="NCBI Taxonomy" id="9600"/>
    <lineage>
        <taxon>Eukaryota</taxon>
        <taxon>Metazoa</taxon>
        <taxon>Chordata</taxon>
        <taxon>Craniata</taxon>
        <taxon>Vertebrata</taxon>
        <taxon>Euteleostomi</taxon>
        <taxon>Mammalia</taxon>
        <taxon>Eutheria</taxon>
        <taxon>Euarchontoglires</taxon>
        <taxon>Primates</taxon>
        <taxon>Haplorrhini</taxon>
        <taxon>Catarrhini</taxon>
        <taxon>Hominidae</taxon>
        <taxon>Pongo</taxon>
    </lineage>
</organism>
<sequence>MVSALREAPLIRVHSSPVSSPSVSGSRRPVSCLSSQSSALSQSGGGSTSAAGIEARSRALRRRWCPAGIILLALISLLSCLLPASEAKVYGRCELARVLHDFGLDGYRGYSLADWVCLAYFTSGFNTAAVDHEADGSTNNGIFQINSRRWCRNLTPNVPNVCQMYCS</sequence>
<dbReference type="EMBL" id="FJ396444">
    <property type="protein sequence ID" value="ACJ06638.1"/>
    <property type="molecule type" value="Genomic_DNA"/>
</dbReference>
<dbReference type="CAZy" id="GH22">
    <property type="family name" value="Glycoside Hydrolase Family 22"/>
</dbReference>
<dbReference type="GO" id="GO:0002080">
    <property type="term" value="C:acrosomal membrane"/>
    <property type="evidence" value="ECO:0007669"/>
    <property type="project" value="UniProtKB-SubCell"/>
</dbReference>
<dbReference type="GO" id="GO:0036126">
    <property type="term" value="C:sperm flagellum"/>
    <property type="evidence" value="ECO:0007669"/>
    <property type="project" value="TreeGrafter"/>
</dbReference>
<dbReference type="GO" id="GO:0003796">
    <property type="term" value="F:lysozyme activity"/>
    <property type="evidence" value="ECO:0007669"/>
    <property type="project" value="InterPro"/>
</dbReference>
<dbReference type="GO" id="GO:0007342">
    <property type="term" value="P:fusion of sperm to egg plasma membrane involved in single fertilization"/>
    <property type="evidence" value="ECO:0007669"/>
    <property type="project" value="TreeGrafter"/>
</dbReference>
<dbReference type="CDD" id="cd16897">
    <property type="entry name" value="LYZ_C"/>
    <property type="match status" value="1"/>
</dbReference>
<dbReference type="FunFam" id="1.10.530.10:FF:000001">
    <property type="entry name" value="Lysozyme C"/>
    <property type="match status" value="1"/>
</dbReference>
<dbReference type="Gene3D" id="1.10.530.10">
    <property type="match status" value="1"/>
</dbReference>
<dbReference type="InterPro" id="IPR001916">
    <property type="entry name" value="Glyco_hydro_22"/>
</dbReference>
<dbReference type="InterPro" id="IPR000974">
    <property type="entry name" value="Glyco_hydro_22_lys"/>
</dbReference>
<dbReference type="InterPro" id="IPR023346">
    <property type="entry name" value="Lysozyme-like_dom_sf"/>
</dbReference>
<dbReference type="PANTHER" id="PTHR11407">
    <property type="entry name" value="LYSOZYME C"/>
    <property type="match status" value="1"/>
</dbReference>
<dbReference type="PANTHER" id="PTHR11407:SF25">
    <property type="entry name" value="SPERM ACROSOME MEMBRANE-ASSOCIATED PROTEIN 3"/>
    <property type="match status" value="1"/>
</dbReference>
<dbReference type="Pfam" id="PF00062">
    <property type="entry name" value="Lys"/>
    <property type="match status" value="1"/>
</dbReference>
<dbReference type="PRINTS" id="PR00137">
    <property type="entry name" value="LYSOZYME"/>
</dbReference>
<dbReference type="PRINTS" id="PR00135">
    <property type="entry name" value="LYZLACT"/>
</dbReference>
<dbReference type="SMART" id="SM00263">
    <property type="entry name" value="LYZ1"/>
    <property type="match status" value="1"/>
</dbReference>
<dbReference type="SUPFAM" id="SSF53955">
    <property type="entry name" value="Lysozyme-like"/>
    <property type="match status" value="1"/>
</dbReference>
<dbReference type="PROSITE" id="PS51348">
    <property type="entry name" value="GLYCOSYL_HYDROL_F22_2"/>
    <property type="match status" value="1"/>
</dbReference>